<accession>Q49XJ7</accession>
<evidence type="ECO:0000255" key="1">
    <source>
        <dbReference type="HAMAP-Rule" id="MF_00418"/>
    </source>
</evidence>
<evidence type="ECO:0000305" key="2"/>
<gene>
    <name evidence="1" type="primary">dapA</name>
    <name type="ordered locus">SSP1355</name>
</gene>
<keyword id="KW-0028">Amino-acid biosynthesis</keyword>
<keyword id="KW-0963">Cytoplasm</keyword>
<keyword id="KW-0220">Diaminopimelate biosynthesis</keyword>
<keyword id="KW-0456">Lyase</keyword>
<keyword id="KW-0457">Lysine biosynthesis</keyword>
<keyword id="KW-1185">Reference proteome</keyword>
<keyword id="KW-0704">Schiff base</keyword>
<comment type="function">
    <text evidence="1">Catalyzes the condensation of (S)-aspartate-beta-semialdehyde [(S)-ASA] and pyruvate to 4-hydroxy-tetrahydrodipicolinate (HTPA).</text>
</comment>
<comment type="catalytic activity">
    <reaction evidence="1">
        <text>L-aspartate 4-semialdehyde + pyruvate = (2S,4S)-4-hydroxy-2,3,4,5-tetrahydrodipicolinate + H2O + H(+)</text>
        <dbReference type="Rhea" id="RHEA:34171"/>
        <dbReference type="ChEBI" id="CHEBI:15361"/>
        <dbReference type="ChEBI" id="CHEBI:15377"/>
        <dbReference type="ChEBI" id="CHEBI:15378"/>
        <dbReference type="ChEBI" id="CHEBI:67139"/>
        <dbReference type="ChEBI" id="CHEBI:537519"/>
        <dbReference type="EC" id="4.3.3.7"/>
    </reaction>
</comment>
<comment type="pathway">
    <text evidence="1">Amino-acid biosynthesis; L-lysine biosynthesis via DAP pathway; (S)-tetrahydrodipicolinate from L-aspartate: step 3/4.</text>
</comment>
<comment type="subunit">
    <text evidence="1">Homodimer.</text>
</comment>
<comment type="subcellular location">
    <subcellularLocation>
        <location evidence="1">Cytoplasm</location>
    </subcellularLocation>
</comment>
<comment type="similarity">
    <text evidence="1">Belongs to the DapA family.</text>
</comment>
<comment type="caution">
    <text evidence="2">Was originally thought to be a dihydrodipicolinate synthase (DHDPS), catalyzing the condensation of (S)-aspartate-beta-semialdehyde [(S)-ASA] and pyruvate to dihydrodipicolinate (DHDP). However, it was shown in E.coli that the product of the enzymatic reaction is not dihydrodipicolinate but in fact (4S)-4-hydroxy-2,3,4,5-tetrahydro-(2S)-dipicolinic acid (HTPA), and that the consecutive dehydration reaction leading to DHDP is not spontaneous but catalyzed by DapB.</text>
</comment>
<reference key="1">
    <citation type="journal article" date="2005" name="Proc. Natl. Acad. Sci. U.S.A.">
        <title>Whole genome sequence of Staphylococcus saprophyticus reveals the pathogenesis of uncomplicated urinary tract infection.</title>
        <authorList>
            <person name="Kuroda M."/>
            <person name="Yamashita A."/>
            <person name="Hirakawa H."/>
            <person name="Kumano M."/>
            <person name="Morikawa K."/>
            <person name="Higashide M."/>
            <person name="Maruyama A."/>
            <person name="Inose Y."/>
            <person name="Matoba K."/>
            <person name="Toh H."/>
            <person name="Kuhara S."/>
            <person name="Hattori M."/>
            <person name="Ohta T."/>
        </authorList>
    </citation>
    <scope>NUCLEOTIDE SEQUENCE [LARGE SCALE GENOMIC DNA]</scope>
    <source>
        <strain>ATCC 15305 / DSM 20229 / NCIMB 8711 / NCTC 7292 / S-41</strain>
    </source>
</reference>
<feature type="chain" id="PRO_0000103164" description="4-hydroxy-tetrahydrodipicolinate synthase">
    <location>
        <begin position="1"/>
        <end position="295"/>
    </location>
</feature>
<feature type="active site" description="Proton donor/acceptor" evidence="1">
    <location>
        <position position="135"/>
    </location>
</feature>
<feature type="active site" description="Schiff-base intermediate with substrate" evidence="1">
    <location>
        <position position="163"/>
    </location>
</feature>
<feature type="binding site" evidence="1">
    <location>
        <position position="47"/>
    </location>
    <ligand>
        <name>pyruvate</name>
        <dbReference type="ChEBI" id="CHEBI:15361"/>
    </ligand>
</feature>
<feature type="binding site" evidence="1">
    <location>
        <position position="206"/>
    </location>
    <ligand>
        <name>pyruvate</name>
        <dbReference type="ChEBI" id="CHEBI:15361"/>
    </ligand>
</feature>
<feature type="site" description="Part of a proton relay during catalysis" evidence="1">
    <location>
        <position position="46"/>
    </location>
</feature>
<feature type="site" description="Part of a proton relay during catalysis" evidence="1">
    <location>
        <position position="109"/>
    </location>
</feature>
<organism>
    <name type="scientific">Staphylococcus saprophyticus subsp. saprophyticus (strain ATCC 15305 / DSM 20229 / NCIMB 8711 / NCTC 7292 / S-41)</name>
    <dbReference type="NCBI Taxonomy" id="342451"/>
    <lineage>
        <taxon>Bacteria</taxon>
        <taxon>Bacillati</taxon>
        <taxon>Bacillota</taxon>
        <taxon>Bacilli</taxon>
        <taxon>Bacillales</taxon>
        <taxon>Staphylococcaceae</taxon>
        <taxon>Staphylococcus</taxon>
    </lineage>
</organism>
<dbReference type="EC" id="4.3.3.7" evidence="1"/>
<dbReference type="EMBL" id="AP008934">
    <property type="protein sequence ID" value="BAE18500.1"/>
    <property type="molecule type" value="Genomic_DNA"/>
</dbReference>
<dbReference type="RefSeq" id="WP_011303134.1">
    <property type="nucleotide sequence ID" value="NZ_MTGA01000038.1"/>
</dbReference>
<dbReference type="SMR" id="Q49XJ7"/>
<dbReference type="GeneID" id="3616693"/>
<dbReference type="KEGG" id="ssp:SSP1355"/>
<dbReference type="PATRIC" id="fig|342451.11.peg.1359"/>
<dbReference type="eggNOG" id="COG0329">
    <property type="taxonomic scope" value="Bacteria"/>
</dbReference>
<dbReference type="HOGENOM" id="CLU_049343_7_0_9"/>
<dbReference type="OrthoDB" id="9782828at2"/>
<dbReference type="UniPathway" id="UPA00034">
    <property type="reaction ID" value="UER00017"/>
</dbReference>
<dbReference type="Proteomes" id="UP000006371">
    <property type="component" value="Chromosome"/>
</dbReference>
<dbReference type="GO" id="GO:0005829">
    <property type="term" value="C:cytosol"/>
    <property type="evidence" value="ECO:0007669"/>
    <property type="project" value="TreeGrafter"/>
</dbReference>
<dbReference type="GO" id="GO:0008840">
    <property type="term" value="F:4-hydroxy-tetrahydrodipicolinate synthase activity"/>
    <property type="evidence" value="ECO:0007669"/>
    <property type="project" value="UniProtKB-UniRule"/>
</dbReference>
<dbReference type="GO" id="GO:0019877">
    <property type="term" value="P:diaminopimelate biosynthetic process"/>
    <property type="evidence" value="ECO:0007669"/>
    <property type="project" value="UniProtKB-UniRule"/>
</dbReference>
<dbReference type="GO" id="GO:0009089">
    <property type="term" value="P:lysine biosynthetic process via diaminopimelate"/>
    <property type="evidence" value="ECO:0007669"/>
    <property type="project" value="UniProtKB-UniRule"/>
</dbReference>
<dbReference type="CDD" id="cd00950">
    <property type="entry name" value="DHDPS"/>
    <property type="match status" value="1"/>
</dbReference>
<dbReference type="Gene3D" id="3.20.20.70">
    <property type="entry name" value="Aldolase class I"/>
    <property type="match status" value="1"/>
</dbReference>
<dbReference type="HAMAP" id="MF_00418">
    <property type="entry name" value="DapA"/>
    <property type="match status" value="1"/>
</dbReference>
<dbReference type="InterPro" id="IPR013785">
    <property type="entry name" value="Aldolase_TIM"/>
</dbReference>
<dbReference type="InterPro" id="IPR005263">
    <property type="entry name" value="DapA"/>
</dbReference>
<dbReference type="InterPro" id="IPR002220">
    <property type="entry name" value="DapA-like"/>
</dbReference>
<dbReference type="InterPro" id="IPR020625">
    <property type="entry name" value="Schiff_base-form_aldolases_AS"/>
</dbReference>
<dbReference type="NCBIfam" id="TIGR00674">
    <property type="entry name" value="dapA"/>
    <property type="match status" value="1"/>
</dbReference>
<dbReference type="PANTHER" id="PTHR12128:SF66">
    <property type="entry name" value="4-HYDROXY-2-OXOGLUTARATE ALDOLASE, MITOCHONDRIAL"/>
    <property type="match status" value="1"/>
</dbReference>
<dbReference type="PANTHER" id="PTHR12128">
    <property type="entry name" value="DIHYDRODIPICOLINATE SYNTHASE"/>
    <property type="match status" value="1"/>
</dbReference>
<dbReference type="Pfam" id="PF00701">
    <property type="entry name" value="DHDPS"/>
    <property type="match status" value="1"/>
</dbReference>
<dbReference type="PIRSF" id="PIRSF001365">
    <property type="entry name" value="DHDPS"/>
    <property type="match status" value="1"/>
</dbReference>
<dbReference type="PRINTS" id="PR00146">
    <property type="entry name" value="DHPICSNTHASE"/>
</dbReference>
<dbReference type="SMART" id="SM01130">
    <property type="entry name" value="DHDPS"/>
    <property type="match status" value="1"/>
</dbReference>
<dbReference type="SUPFAM" id="SSF51569">
    <property type="entry name" value="Aldolase"/>
    <property type="match status" value="1"/>
</dbReference>
<dbReference type="PROSITE" id="PS00666">
    <property type="entry name" value="DHDPS_2"/>
    <property type="match status" value="1"/>
</dbReference>
<proteinExistence type="inferred from homology"/>
<protein>
    <recommendedName>
        <fullName evidence="1">4-hydroxy-tetrahydrodipicolinate synthase</fullName>
        <shortName evidence="1">HTPA synthase</shortName>
        <ecNumber evidence="1">4.3.3.7</ecNumber>
    </recommendedName>
</protein>
<name>DAPA_STAS1</name>
<sequence length="295" mass="32533">MGHIFEGVGVALATPFTHNEVDFDALRRHVKYLLDNNAKSIVVNGTTAENPTLTDEEKDQILEVVVNVVDGRVPVIAGTGTNNTQKSIQASVRAREIGADAIMLITPYYNKTNQRGLIAHFTTIADAVKLPVVLYNVPSRTNMTIDAETVETLSENEYIVALKDATNDFDYLEDLKQRLNLDEFALYSGNDDNIVDYFNQGGHGVISVVANVIPNAFQSLYDAKQNDENIQSQFQPIQTLLDALAVDVNPIPVKALTAVEGFGNYEVRLPLVTLEDSDRQKLEQAYEQFKVGGNS</sequence>